<comment type="subcellular location">
    <subcellularLocation>
        <location evidence="1">Mitochondrion</location>
    </subcellularLocation>
</comment>
<sequence length="294" mass="33871">MTKTYRISSGLLREAVKKITIARDSAFFVDKEILSKSSELKNSLINPCHNVVREFVRESRDCDSDDYKREYRLNDYRLELTQPPSNISRGVIVVKTVRRWELINQKYNADLWIPPAKKGVVITPDIIDKLYLFWDNFLGSYEKEGINRKQNTDPVSKGKVFDLLASRSSNNTNQTPEELREIQTQIEHLTIHFDEGSVHESAGQLKGKFFNKDRQSARDYLLDKLKDDKDKDIVRGMGTYTLECVAIHVLSKLFNVFSLEKTSVLAAALISELDITAKTEYNNALLAKMQREKE</sequence>
<geneLocation type="mitochondrion"/>
<geneLocation type="plasmid">
    <name>2.3 kb</name>
</geneLocation>
<organism>
    <name type="scientific">Zea mays</name>
    <name type="common">Maize</name>
    <dbReference type="NCBI Taxonomy" id="4577"/>
    <lineage>
        <taxon>Eukaryota</taxon>
        <taxon>Viridiplantae</taxon>
        <taxon>Streptophyta</taxon>
        <taxon>Embryophyta</taxon>
        <taxon>Tracheophyta</taxon>
        <taxon>Spermatophyta</taxon>
        <taxon>Magnoliopsida</taxon>
        <taxon>Liliopsida</taxon>
        <taxon>Poales</taxon>
        <taxon>Poaceae</taxon>
        <taxon>PACMAD clade</taxon>
        <taxon>Panicoideae</taxon>
        <taxon>Andropogonodae</taxon>
        <taxon>Andropogoneae</taxon>
        <taxon>Tripsacinae</taxon>
        <taxon>Zea</taxon>
    </lineage>
</organism>
<protein>
    <recommendedName>
        <fullName>Uncharacterized 33.9 kDa protein in mitochondrial linear 2.3 KB plasmid</fullName>
    </recommendedName>
</protein>
<evidence type="ECO:0000305" key="1"/>
<feature type="chain" id="PRO_0000196905" description="Uncharacterized 33.9 kDa protein in mitochondrial linear 2.3 KB plasmid">
    <location>
        <begin position="1"/>
        <end position="294"/>
    </location>
</feature>
<keyword id="KW-0496">Mitochondrion</keyword>
<keyword id="KW-0614">Plasmid</keyword>
<accession>P33544</accession>
<name>YM23_MAIZE</name>
<dbReference type="EMBL" id="X13704">
    <property type="protein sequence ID" value="CAA31989.1"/>
    <property type="molecule type" value="Genomic_DNA"/>
</dbReference>
<dbReference type="PIR" id="S04740">
    <property type="entry name" value="S04740"/>
</dbReference>
<dbReference type="SMR" id="P33544"/>
<dbReference type="MaizeGDB" id="78801"/>
<dbReference type="ExpressionAtlas" id="P33544">
    <property type="expression patterns" value="baseline"/>
</dbReference>
<dbReference type="GO" id="GO:0005739">
    <property type="term" value="C:mitochondrion"/>
    <property type="evidence" value="ECO:0007669"/>
    <property type="project" value="UniProtKB-SubCell"/>
</dbReference>
<reference key="1">
    <citation type="journal article" date="1989" name="Nucleic Acids Res.">
        <title>Molecular analysis of the linear 2.3 kb plasmid of maize mitochondria: apparent capture of tRNA genes.</title>
        <authorList>
            <person name="Leon P."/>
            <person name="Walbot V."/>
            <person name="Bedinger P."/>
        </authorList>
    </citation>
    <scope>NUCLEOTIDE SEQUENCE [GENOMIC DNA]</scope>
    <source>
        <strain>cv. B37N</strain>
    </source>
</reference>
<proteinExistence type="predicted"/>